<accession>C6E7G0</accession>
<proteinExistence type="inferred from homology"/>
<protein>
    <recommendedName>
        <fullName evidence="1">ATP phosphoribosyltransferase</fullName>
        <shortName evidence="1">ATP-PRT</shortName>
        <shortName evidence="1">ATP-PRTase</shortName>
        <ecNumber evidence="1">2.4.2.17</ecNumber>
    </recommendedName>
</protein>
<feature type="chain" id="PRO_1000213268" description="ATP phosphoribosyltransferase">
    <location>
        <begin position="1"/>
        <end position="212"/>
    </location>
</feature>
<evidence type="ECO:0000255" key="1">
    <source>
        <dbReference type="HAMAP-Rule" id="MF_01018"/>
    </source>
</evidence>
<keyword id="KW-0028">Amino-acid biosynthesis</keyword>
<keyword id="KW-0067">ATP-binding</keyword>
<keyword id="KW-0963">Cytoplasm</keyword>
<keyword id="KW-0328">Glycosyltransferase</keyword>
<keyword id="KW-0368">Histidine biosynthesis</keyword>
<keyword id="KW-0547">Nucleotide-binding</keyword>
<keyword id="KW-0808">Transferase</keyword>
<comment type="function">
    <text evidence="1">Catalyzes the condensation of ATP and 5-phosphoribose 1-diphosphate to form N'-(5'-phosphoribosyl)-ATP (PR-ATP). Has a crucial role in the pathway because the rate of histidine biosynthesis seems to be controlled primarily by regulation of HisG enzymatic activity.</text>
</comment>
<comment type="catalytic activity">
    <reaction evidence="1">
        <text>1-(5-phospho-beta-D-ribosyl)-ATP + diphosphate = 5-phospho-alpha-D-ribose 1-diphosphate + ATP</text>
        <dbReference type="Rhea" id="RHEA:18473"/>
        <dbReference type="ChEBI" id="CHEBI:30616"/>
        <dbReference type="ChEBI" id="CHEBI:33019"/>
        <dbReference type="ChEBI" id="CHEBI:58017"/>
        <dbReference type="ChEBI" id="CHEBI:73183"/>
        <dbReference type="EC" id="2.4.2.17"/>
    </reaction>
</comment>
<comment type="pathway">
    <text evidence="1">Amino-acid biosynthesis; L-histidine biosynthesis; L-histidine from 5-phospho-alpha-D-ribose 1-diphosphate: step 1/9.</text>
</comment>
<comment type="subunit">
    <text evidence="1">Heteromultimer composed of HisG and HisZ subunits.</text>
</comment>
<comment type="subcellular location">
    <subcellularLocation>
        <location evidence="1">Cytoplasm</location>
    </subcellularLocation>
</comment>
<comment type="domain">
    <text>Lacks the C-terminal regulatory region which is replaced by HisZ.</text>
</comment>
<comment type="similarity">
    <text evidence="1">Belongs to the ATP phosphoribosyltransferase family. Short subfamily.</text>
</comment>
<name>HIS1_GEOSM</name>
<sequence length="212" mass="23914">MPDFITIAIPKGRILQDSVALFKKIGIDCEELLSDTRKLVFENQEQKMRYMIVRATDVPTYVEYGCADLGIVGKDTLMEAEKDLYEPLDLKFGYCRLMVAEPVELSSKDDPSAWNNIRIATKYPNVTEKYFAAKGIQVELIKLYGSIELAPLVGLSERIVDLVSTGETLKQNGLAEIETIAEITCRLIVNRASMKTKHERISKIIEGLEQHI</sequence>
<dbReference type="EC" id="2.4.2.17" evidence="1"/>
<dbReference type="EMBL" id="CP001661">
    <property type="protein sequence ID" value="ACT19820.1"/>
    <property type="molecule type" value="Genomic_DNA"/>
</dbReference>
<dbReference type="SMR" id="C6E7G0"/>
<dbReference type="STRING" id="443144.GM21_3801"/>
<dbReference type="KEGG" id="gem:GM21_3801"/>
<dbReference type="eggNOG" id="COG0040">
    <property type="taxonomic scope" value="Bacteria"/>
</dbReference>
<dbReference type="HOGENOM" id="CLU_038115_2_0_7"/>
<dbReference type="OrthoDB" id="9801867at2"/>
<dbReference type="UniPathway" id="UPA00031">
    <property type="reaction ID" value="UER00006"/>
</dbReference>
<dbReference type="GO" id="GO:0005737">
    <property type="term" value="C:cytoplasm"/>
    <property type="evidence" value="ECO:0007669"/>
    <property type="project" value="UniProtKB-SubCell"/>
</dbReference>
<dbReference type="GO" id="GO:0005524">
    <property type="term" value="F:ATP binding"/>
    <property type="evidence" value="ECO:0007669"/>
    <property type="project" value="UniProtKB-KW"/>
</dbReference>
<dbReference type="GO" id="GO:0003879">
    <property type="term" value="F:ATP phosphoribosyltransferase activity"/>
    <property type="evidence" value="ECO:0007669"/>
    <property type="project" value="UniProtKB-UniRule"/>
</dbReference>
<dbReference type="GO" id="GO:0000105">
    <property type="term" value="P:L-histidine biosynthetic process"/>
    <property type="evidence" value="ECO:0007669"/>
    <property type="project" value="UniProtKB-UniRule"/>
</dbReference>
<dbReference type="CDD" id="cd13595">
    <property type="entry name" value="PBP2_HisGs"/>
    <property type="match status" value="1"/>
</dbReference>
<dbReference type="FunFam" id="3.40.190.10:FF:000011">
    <property type="entry name" value="ATP phosphoribosyltransferase"/>
    <property type="match status" value="1"/>
</dbReference>
<dbReference type="Gene3D" id="3.40.190.10">
    <property type="entry name" value="Periplasmic binding protein-like II"/>
    <property type="match status" value="2"/>
</dbReference>
<dbReference type="HAMAP" id="MF_01018">
    <property type="entry name" value="HisG_Short"/>
    <property type="match status" value="1"/>
</dbReference>
<dbReference type="InterPro" id="IPR013820">
    <property type="entry name" value="ATP_PRibTrfase_cat"/>
</dbReference>
<dbReference type="InterPro" id="IPR018198">
    <property type="entry name" value="ATP_PRibTrfase_CS"/>
</dbReference>
<dbReference type="InterPro" id="IPR001348">
    <property type="entry name" value="ATP_PRibTrfase_HisG"/>
</dbReference>
<dbReference type="InterPro" id="IPR024893">
    <property type="entry name" value="ATP_PRibTrfase_HisG_short"/>
</dbReference>
<dbReference type="NCBIfam" id="TIGR00070">
    <property type="entry name" value="hisG"/>
    <property type="match status" value="1"/>
</dbReference>
<dbReference type="PANTHER" id="PTHR21403:SF8">
    <property type="entry name" value="ATP PHOSPHORIBOSYLTRANSFERASE"/>
    <property type="match status" value="1"/>
</dbReference>
<dbReference type="PANTHER" id="PTHR21403">
    <property type="entry name" value="ATP PHOSPHORIBOSYLTRANSFERASE ATP-PRTASE"/>
    <property type="match status" value="1"/>
</dbReference>
<dbReference type="Pfam" id="PF01634">
    <property type="entry name" value="HisG"/>
    <property type="match status" value="1"/>
</dbReference>
<dbReference type="SUPFAM" id="SSF53850">
    <property type="entry name" value="Periplasmic binding protein-like II"/>
    <property type="match status" value="1"/>
</dbReference>
<dbReference type="PROSITE" id="PS01316">
    <property type="entry name" value="ATP_P_PHORIBOSYLTR"/>
    <property type="match status" value="1"/>
</dbReference>
<gene>
    <name evidence="1" type="primary">hisG</name>
    <name type="ordered locus">GM21_3801</name>
</gene>
<organism>
    <name type="scientific">Geobacter sp. (strain M21)</name>
    <dbReference type="NCBI Taxonomy" id="443144"/>
    <lineage>
        <taxon>Bacteria</taxon>
        <taxon>Pseudomonadati</taxon>
        <taxon>Thermodesulfobacteriota</taxon>
        <taxon>Desulfuromonadia</taxon>
        <taxon>Geobacterales</taxon>
        <taxon>Geobacteraceae</taxon>
        <taxon>Geobacter</taxon>
    </lineage>
</organism>
<reference key="1">
    <citation type="submission" date="2009-07" db="EMBL/GenBank/DDBJ databases">
        <title>Complete sequence of Geobacter sp. M21.</title>
        <authorList>
            <consortium name="US DOE Joint Genome Institute"/>
            <person name="Lucas S."/>
            <person name="Copeland A."/>
            <person name="Lapidus A."/>
            <person name="Glavina del Rio T."/>
            <person name="Dalin E."/>
            <person name="Tice H."/>
            <person name="Bruce D."/>
            <person name="Goodwin L."/>
            <person name="Pitluck S."/>
            <person name="Saunders E."/>
            <person name="Brettin T."/>
            <person name="Detter J.C."/>
            <person name="Han C."/>
            <person name="Larimer F."/>
            <person name="Land M."/>
            <person name="Hauser L."/>
            <person name="Kyrpides N."/>
            <person name="Ovchinnikova G."/>
            <person name="Lovley D."/>
        </authorList>
    </citation>
    <scope>NUCLEOTIDE SEQUENCE [LARGE SCALE GENOMIC DNA]</scope>
    <source>
        <strain>M21</strain>
    </source>
</reference>